<keyword id="KW-0687">Ribonucleoprotein</keyword>
<keyword id="KW-0689">Ribosomal protein</keyword>
<keyword id="KW-0694">RNA-binding</keyword>
<keyword id="KW-0699">rRNA-binding</keyword>
<comment type="function">
    <text evidence="1">One of the primary rRNA binding proteins, it binds directly near the 3'-end of the 23S rRNA, where it nucleates assembly of the 50S subunit.</text>
</comment>
<comment type="subunit">
    <text evidence="1">Part of the 50S ribosomal subunit. Forms a cluster with proteins L14 and L19.</text>
</comment>
<comment type="similarity">
    <text evidence="1">Belongs to the universal ribosomal protein uL3 family.</text>
</comment>
<dbReference type="EMBL" id="CP000764">
    <property type="protein sequence ID" value="ABS20478.1"/>
    <property type="molecule type" value="Genomic_DNA"/>
</dbReference>
<dbReference type="RefSeq" id="WP_011983245.1">
    <property type="nucleotide sequence ID" value="NC_009674.1"/>
</dbReference>
<dbReference type="SMR" id="A7GK20"/>
<dbReference type="STRING" id="315749.Bcer98_0104"/>
<dbReference type="GeneID" id="33895425"/>
<dbReference type="KEGG" id="bcy:Bcer98_0104"/>
<dbReference type="eggNOG" id="COG0087">
    <property type="taxonomic scope" value="Bacteria"/>
</dbReference>
<dbReference type="HOGENOM" id="CLU_044142_4_1_9"/>
<dbReference type="OrthoDB" id="9806135at2"/>
<dbReference type="Proteomes" id="UP000002300">
    <property type="component" value="Chromosome"/>
</dbReference>
<dbReference type="GO" id="GO:0022625">
    <property type="term" value="C:cytosolic large ribosomal subunit"/>
    <property type="evidence" value="ECO:0007669"/>
    <property type="project" value="TreeGrafter"/>
</dbReference>
<dbReference type="GO" id="GO:0019843">
    <property type="term" value="F:rRNA binding"/>
    <property type="evidence" value="ECO:0007669"/>
    <property type="project" value="UniProtKB-UniRule"/>
</dbReference>
<dbReference type="GO" id="GO:0003735">
    <property type="term" value="F:structural constituent of ribosome"/>
    <property type="evidence" value="ECO:0007669"/>
    <property type="project" value="InterPro"/>
</dbReference>
<dbReference type="GO" id="GO:0006412">
    <property type="term" value="P:translation"/>
    <property type="evidence" value="ECO:0007669"/>
    <property type="project" value="UniProtKB-UniRule"/>
</dbReference>
<dbReference type="FunFam" id="2.40.30.10:FF:000004">
    <property type="entry name" value="50S ribosomal protein L3"/>
    <property type="match status" value="1"/>
</dbReference>
<dbReference type="FunFam" id="3.30.160.810:FF:000002">
    <property type="entry name" value="50S ribosomal protein L3"/>
    <property type="match status" value="1"/>
</dbReference>
<dbReference type="Gene3D" id="3.30.160.810">
    <property type="match status" value="1"/>
</dbReference>
<dbReference type="Gene3D" id="2.40.30.10">
    <property type="entry name" value="Translation factors"/>
    <property type="match status" value="1"/>
</dbReference>
<dbReference type="HAMAP" id="MF_01325_B">
    <property type="entry name" value="Ribosomal_uL3_B"/>
    <property type="match status" value="1"/>
</dbReference>
<dbReference type="InterPro" id="IPR000597">
    <property type="entry name" value="Ribosomal_uL3"/>
</dbReference>
<dbReference type="InterPro" id="IPR019927">
    <property type="entry name" value="Ribosomal_uL3_bac/org-type"/>
</dbReference>
<dbReference type="InterPro" id="IPR019926">
    <property type="entry name" value="Ribosomal_uL3_CS"/>
</dbReference>
<dbReference type="InterPro" id="IPR009000">
    <property type="entry name" value="Transl_B-barrel_sf"/>
</dbReference>
<dbReference type="NCBIfam" id="TIGR03625">
    <property type="entry name" value="L3_bact"/>
    <property type="match status" value="1"/>
</dbReference>
<dbReference type="PANTHER" id="PTHR11229">
    <property type="entry name" value="50S RIBOSOMAL PROTEIN L3"/>
    <property type="match status" value="1"/>
</dbReference>
<dbReference type="PANTHER" id="PTHR11229:SF16">
    <property type="entry name" value="LARGE RIBOSOMAL SUBUNIT PROTEIN UL3C"/>
    <property type="match status" value="1"/>
</dbReference>
<dbReference type="Pfam" id="PF00297">
    <property type="entry name" value="Ribosomal_L3"/>
    <property type="match status" value="1"/>
</dbReference>
<dbReference type="SUPFAM" id="SSF50447">
    <property type="entry name" value="Translation proteins"/>
    <property type="match status" value="1"/>
</dbReference>
<dbReference type="PROSITE" id="PS00474">
    <property type="entry name" value="RIBOSOMAL_L3"/>
    <property type="match status" value="1"/>
</dbReference>
<sequence length="210" mass="22617">MTKGILGRKIGMTQVFAENGELIPVTVIEATPNVVLQKKTTETDGYNAIQLGFEDKREKLANKPEQGHVAKASTAPKRFIREIRDADVDGLEVGQEVKVEVFAAGETVDVTGISKGKGFQGAIKRHGQSRGPMSHGSRYHRRPGSMGPVAPNRVFKGKKLAGRMGGDQITIQNLEIVQVDVERNLLLIKGNVPGAKKSLVVVQGAVKASK</sequence>
<reference key="1">
    <citation type="journal article" date="2008" name="Chem. Biol. Interact.">
        <title>Extending the Bacillus cereus group genomics to putative food-borne pathogens of different toxicity.</title>
        <authorList>
            <person name="Lapidus A."/>
            <person name="Goltsman E."/>
            <person name="Auger S."/>
            <person name="Galleron N."/>
            <person name="Segurens B."/>
            <person name="Dossat C."/>
            <person name="Land M.L."/>
            <person name="Broussolle V."/>
            <person name="Brillard J."/>
            <person name="Guinebretiere M.-H."/>
            <person name="Sanchis V."/>
            <person name="Nguen-the C."/>
            <person name="Lereclus D."/>
            <person name="Richardson P."/>
            <person name="Wincker P."/>
            <person name="Weissenbach J."/>
            <person name="Ehrlich S.D."/>
            <person name="Sorokin A."/>
        </authorList>
    </citation>
    <scope>NUCLEOTIDE SEQUENCE [LARGE SCALE GENOMIC DNA]</scope>
    <source>
        <strain>DSM 22905 / CIP 110041 / 391-98 / NVH 391-98</strain>
    </source>
</reference>
<organism>
    <name type="scientific">Bacillus cytotoxicus (strain DSM 22905 / CIP 110041 / 391-98 / NVH 391-98)</name>
    <dbReference type="NCBI Taxonomy" id="315749"/>
    <lineage>
        <taxon>Bacteria</taxon>
        <taxon>Bacillati</taxon>
        <taxon>Bacillota</taxon>
        <taxon>Bacilli</taxon>
        <taxon>Bacillales</taxon>
        <taxon>Bacillaceae</taxon>
        <taxon>Bacillus</taxon>
        <taxon>Bacillus cereus group</taxon>
    </lineage>
</organism>
<evidence type="ECO:0000255" key="1">
    <source>
        <dbReference type="HAMAP-Rule" id="MF_01325"/>
    </source>
</evidence>
<evidence type="ECO:0000256" key="2">
    <source>
        <dbReference type="SAM" id="MobiDB-lite"/>
    </source>
</evidence>
<evidence type="ECO:0000305" key="3"/>
<feature type="chain" id="PRO_1000086426" description="Large ribosomal subunit protein uL3">
    <location>
        <begin position="1"/>
        <end position="210"/>
    </location>
</feature>
<feature type="region of interest" description="Disordered" evidence="2">
    <location>
        <begin position="119"/>
        <end position="151"/>
    </location>
</feature>
<protein>
    <recommendedName>
        <fullName evidence="1">Large ribosomal subunit protein uL3</fullName>
    </recommendedName>
    <alternativeName>
        <fullName evidence="3">50S ribosomal protein L3</fullName>
    </alternativeName>
</protein>
<gene>
    <name evidence="1" type="primary">rplC</name>
    <name type="ordered locus">Bcer98_0104</name>
</gene>
<name>RL3_BACCN</name>
<accession>A7GK20</accession>
<proteinExistence type="inferred from homology"/>